<dbReference type="EMBL" id="CP000916">
    <property type="protein sequence ID" value="ACM23330.1"/>
    <property type="molecule type" value="Genomic_DNA"/>
</dbReference>
<dbReference type="SMR" id="B9K8P7"/>
<dbReference type="STRING" id="309803.CTN_1154"/>
<dbReference type="KEGG" id="tna:CTN_1154"/>
<dbReference type="eggNOG" id="COG0335">
    <property type="taxonomic scope" value="Bacteria"/>
</dbReference>
<dbReference type="HOGENOM" id="CLU_103507_2_1_0"/>
<dbReference type="Proteomes" id="UP000000445">
    <property type="component" value="Chromosome"/>
</dbReference>
<dbReference type="GO" id="GO:0022625">
    <property type="term" value="C:cytosolic large ribosomal subunit"/>
    <property type="evidence" value="ECO:0007669"/>
    <property type="project" value="TreeGrafter"/>
</dbReference>
<dbReference type="GO" id="GO:0003735">
    <property type="term" value="F:structural constituent of ribosome"/>
    <property type="evidence" value="ECO:0007669"/>
    <property type="project" value="InterPro"/>
</dbReference>
<dbReference type="GO" id="GO:0006412">
    <property type="term" value="P:translation"/>
    <property type="evidence" value="ECO:0007669"/>
    <property type="project" value="UniProtKB-UniRule"/>
</dbReference>
<dbReference type="FunFam" id="2.30.30.790:FF:000001">
    <property type="entry name" value="50S ribosomal protein L19"/>
    <property type="match status" value="1"/>
</dbReference>
<dbReference type="Gene3D" id="2.30.30.790">
    <property type="match status" value="1"/>
</dbReference>
<dbReference type="HAMAP" id="MF_00402">
    <property type="entry name" value="Ribosomal_bL19"/>
    <property type="match status" value="1"/>
</dbReference>
<dbReference type="InterPro" id="IPR001857">
    <property type="entry name" value="Ribosomal_bL19"/>
</dbReference>
<dbReference type="InterPro" id="IPR018257">
    <property type="entry name" value="Ribosomal_bL19_CS"/>
</dbReference>
<dbReference type="InterPro" id="IPR038657">
    <property type="entry name" value="Ribosomal_bL19_sf"/>
</dbReference>
<dbReference type="InterPro" id="IPR008991">
    <property type="entry name" value="Translation_prot_SH3-like_sf"/>
</dbReference>
<dbReference type="NCBIfam" id="TIGR01024">
    <property type="entry name" value="rplS_bact"/>
    <property type="match status" value="1"/>
</dbReference>
<dbReference type="PANTHER" id="PTHR15680:SF9">
    <property type="entry name" value="LARGE RIBOSOMAL SUBUNIT PROTEIN BL19M"/>
    <property type="match status" value="1"/>
</dbReference>
<dbReference type="PANTHER" id="PTHR15680">
    <property type="entry name" value="RIBOSOMAL PROTEIN L19"/>
    <property type="match status" value="1"/>
</dbReference>
<dbReference type="Pfam" id="PF01245">
    <property type="entry name" value="Ribosomal_L19"/>
    <property type="match status" value="1"/>
</dbReference>
<dbReference type="PIRSF" id="PIRSF002191">
    <property type="entry name" value="Ribosomal_L19"/>
    <property type="match status" value="1"/>
</dbReference>
<dbReference type="PRINTS" id="PR00061">
    <property type="entry name" value="RIBOSOMALL19"/>
</dbReference>
<dbReference type="SUPFAM" id="SSF50104">
    <property type="entry name" value="Translation proteins SH3-like domain"/>
    <property type="match status" value="1"/>
</dbReference>
<dbReference type="PROSITE" id="PS01015">
    <property type="entry name" value="RIBOSOMAL_L19"/>
    <property type="match status" value="1"/>
</dbReference>
<proteinExistence type="inferred from homology"/>
<reference key="1">
    <citation type="submission" date="2007-11" db="EMBL/GenBank/DDBJ databases">
        <title>The genome sequence of the hyperthermophilic bacterium Thermotoga neapolitana.</title>
        <authorList>
            <person name="Lim S.K."/>
            <person name="Kim J.S."/>
            <person name="Cha S.H."/>
            <person name="Park B.C."/>
            <person name="Lee D.S."/>
            <person name="Tae H.S."/>
            <person name="Kim S.-J."/>
            <person name="Kim J.J."/>
            <person name="Park K.J."/>
            <person name="Lee S.Y."/>
        </authorList>
    </citation>
    <scope>NUCLEOTIDE SEQUENCE [LARGE SCALE GENOMIC DNA]</scope>
    <source>
        <strain>ATCC 49049 / DSM 4359 / NBRC 107923 / NS-E</strain>
    </source>
</reference>
<sequence length="117" mass="13737">MSMDHLVRIIEKKYEKKEIPDFRPGDTVRVHVKVIEGDRERTQVFEGIVIAKRGSGINRTFTVRRIGSHGVGVERIFPFHSPVVEKIEVVRKGKVRRAKLYYLRDVKGKIRIKERRD</sequence>
<evidence type="ECO:0000255" key="1">
    <source>
        <dbReference type="HAMAP-Rule" id="MF_00402"/>
    </source>
</evidence>
<evidence type="ECO:0000305" key="2"/>
<organism>
    <name type="scientific">Thermotoga neapolitana (strain ATCC 49049 / DSM 4359 / NBRC 107923 / NS-E)</name>
    <dbReference type="NCBI Taxonomy" id="309803"/>
    <lineage>
        <taxon>Bacteria</taxon>
        <taxon>Thermotogati</taxon>
        <taxon>Thermotogota</taxon>
        <taxon>Thermotogae</taxon>
        <taxon>Thermotogales</taxon>
        <taxon>Thermotogaceae</taxon>
        <taxon>Thermotoga</taxon>
    </lineage>
</organism>
<comment type="function">
    <text evidence="1">This protein is located at the 30S-50S ribosomal subunit interface and may play a role in the structure and function of the aminoacyl-tRNA binding site.</text>
</comment>
<comment type="similarity">
    <text evidence="1">Belongs to the bacterial ribosomal protein bL19 family.</text>
</comment>
<accession>B9K8P7</accession>
<gene>
    <name evidence="1" type="primary">rplS</name>
    <name type="ordered locus">CTN_1154</name>
</gene>
<feature type="chain" id="PRO_1000193911" description="Large ribosomal subunit protein bL19">
    <location>
        <begin position="1"/>
        <end position="117"/>
    </location>
</feature>
<protein>
    <recommendedName>
        <fullName evidence="1">Large ribosomal subunit protein bL19</fullName>
    </recommendedName>
    <alternativeName>
        <fullName evidence="2">50S ribosomal protein L19</fullName>
    </alternativeName>
</protein>
<keyword id="KW-0687">Ribonucleoprotein</keyword>
<keyword id="KW-0689">Ribosomal protein</keyword>
<name>RL19_THENN</name>